<keyword id="KW-0687">Ribonucleoprotein</keyword>
<keyword id="KW-0689">Ribosomal protein</keyword>
<keyword id="KW-0694">RNA-binding</keyword>
<keyword id="KW-0699">rRNA-binding</keyword>
<accession>B1AIM1</accession>
<sequence>MAKIKLLSIDGNFAKELEVTSDLFVEVPHKQAMFDSVLAENAAERQGTHSTLTKGEVRGGGKKPWRQKHTGKARTGSTRNPHWTGGGVVFGPKPNRNYNLKVNAKVRLLAFKSALTIKLNEGKMLGLVANSDLETPSTKKMVNFINNANLENQKVLLVIVDNFSNIKKSTNNLQKVTTKLWYQVSVRDLMHANVVVVAEEAFTNYARKVSK</sequence>
<feature type="chain" id="PRO_1000086542" description="Large ribosomal subunit protein uL4">
    <location>
        <begin position="1"/>
        <end position="211"/>
    </location>
</feature>
<feature type="region of interest" description="Disordered" evidence="2">
    <location>
        <begin position="44"/>
        <end position="90"/>
    </location>
</feature>
<feature type="compositionally biased region" description="Basic residues" evidence="2">
    <location>
        <begin position="60"/>
        <end position="72"/>
    </location>
</feature>
<name>RL4_UREP2</name>
<proteinExistence type="inferred from homology"/>
<evidence type="ECO:0000255" key="1">
    <source>
        <dbReference type="HAMAP-Rule" id="MF_01328"/>
    </source>
</evidence>
<evidence type="ECO:0000256" key="2">
    <source>
        <dbReference type="SAM" id="MobiDB-lite"/>
    </source>
</evidence>
<evidence type="ECO:0000305" key="3"/>
<reference key="1">
    <citation type="submission" date="2008-02" db="EMBL/GenBank/DDBJ databases">
        <title>Genome sequence of Ureaplasma parvum serovar 3.</title>
        <authorList>
            <person name="Methe B.A."/>
            <person name="Glass J."/>
            <person name="Waites K."/>
            <person name="Shrivastava S."/>
        </authorList>
    </citation>
    <scope>NUCLEOTIDE SEQUENCE [LARGE SCALE GENOMIC DNA]</scope>
    <source>
        <strain>ATCC 27815 / 27 / NCTC 11736</strain>
    </source>
</reference>
<gene>
    <name evidence="1" type="primary">rplD</name>
    <name type="ordered locus">UPA3_0240</name>
</gene>
<organism>
    <name type="scientific">Ureaplasma parvum serovar 3 (strain ATCC 27815 / 27 / NCTC 11736)</name>
    <dbReference type="NCBI Taxonomy" id="505682"/>
    <lineage>
        <taxon>Bacteria</taxon>
        <taxon>Bacillati</taxon>
        <taxon>Mycoplasmatota</taxon>
        <taxon>Mycoplasmoidales</taxon>
        <taxon>Mycoplasmoidaceae</taxon>
        <taxon>Ureaplasma</taxon>
    </lineage>
</organism>
<comment type="function">
    <text evidence="1">One of the primary rRNA binding proteins, this protein initially binds near the 5'-end of the 23S rRNA. It is important during the early stages of 50S assembly. It makes multiple contacts with different domains of the 23S rRNA in the assembled 50S subunit and ribosome.</text>
</comment>
<comment type="function">
    <text evidence="1">Forms part of the polypeptide exit tunnel.</text>
</comment>
<comment type="subunit">
    <text evidence="1">Part of the 50S ribosomal subunit.</text>
</comment>
<comment type="similarity">
    <text evidence="1">Belongs to the universal ribosomal protein uL4 family.</text>
</comment>
<dbReference type="EMBL" id="CP000942">
    <property type="protein sequence ID" value="ACA32851.1"/>
    <property type="molecule type" value="Genomic_DNA"/>
</dbReference>
<dbReference type="RefSeq" id="WP_006688823.1">
    <property type="nucleotide sequence ID" value="NC_010503.1"/>
</dbReference>
<dbReference type="SMR" id="B1AIM1"/>
<dbReference type="GeneID" id="29672617"/>
<dbReference type="KEGG" id="upa:UPA3_0240"/>
<dbReference type="HOGENOM" id="CLU_041575_5_2_14"/>
<dbReference type="Proteomes" id="UP000002162">
    <property type="component" value="Chromosome"/>
</dbReference>
<dbReference type="GO" id="GO:1990904">
    <property type="term" value="C:ribonucleoprotein complex"/>
    <property type="evidence" value="ECO:0007669"/>
    <property type="project" value="UniProtKB-KW"/>
</dbReference>
<dbReference type="GO" id="GO:0005840">
    <property type="term" value="C:ribosome"/>
    <property type="evidence" value="ECO:0007669"/>
    <property type="project" value="UniProtKB-KW"/>
</dbReference>
<dbReference type="GO" id="GO:0019843">
    <property type="term" value="F:rRNA binding"/>
    <property type="evidence" value="ECO:0007669"/>
    <property type="project" value="UniProtKB-UniRule"/>
</dbReference>
<dbReference type="GO" id="GO:0003735">
    <property type="term" value="F:structural constituent of ribosome"/>
    <property type="evidence" value="ECO:0007669"/>
    <property type="project" value="InterPro"/>
</dbReference>
<dbReference type="GO" id="GO:0006412">
    <property type="term" value="P:translation"/>
    <property type="evidence" value="ECO:0007669"/>
    <property type="project" value="UniProtKB-UniRule"/>
</dbReference>
<dbReference type="Gene3D" id="3.40.1370.10">
    <property type="match status" value="1"/>
</dbReference>
<dbReference type="HAMAP" id="MF_01328_B">
    <property type="entry name" value="Ribosomal_uL4_B"/>
    <property type="match status" value="1"/>
</dbReference>
<dbReference type="InterPro" id="IPR002136">
    <property type="entry name" value="Ribosomal_uL4"/>
</dbReference>
<dbReference type="InterPro" id="IPR013005">
    <property type="entry name" value="Ribosomal_uL4-like"/>
</dbReference>
<dbReference type="InterPro" id="IPR023574">
    <property type="entry name" value="Ribosomal_uL4_dom_sf"/>
</dbReference>
<dbReference type="NCBIfam" id="TIGR03953">
    <property type="entry name" value="rplD_bact"/>
    <property type="match status" value="1"/>
</dbReference>
<dbReference type="PANTHER" id="PTHR10746">
    <property type="entry name" value="50S RIBOSOMAL PROTEIN L4"/>
    <property type="match status" value="1"/>
</dbReference>
<dbReference type="PANTHER" id="PTHR10746:SF6">
    <property type="entry name" value="LARGE RIBOSOMAL SUBUNIT PROTEIN UL4M"/>
    <property type="match status" value="1"/>
</dbReference>
<dbReference type="Pfam" id="PF00573">
    <property type="entry name" value="Ribosomal_L4"/>
    <property type="match status" value="1"/>
</dbReference>
<dbReference type="SUPFAM" id="SSF52166">
    <property type="entry name" value="Ribosomal protein L4"/>
    <property type="match status" value="1"/>
</dbReference>
<protein>
    <recommendedName>
        <fullName evidence="1">Large ribosomal subunit protein uL4</fullName>
    </recommendedName>
    <alternativeName>
        <fullName evidence="3">50S ribosomal protein L4</fullName>
    </alternativeName>
</protein>